<organism>
    <name type="scientific">Macrococcus caseolyticus (strain JCSC5402)</name>
    <name type="common">Macrococcoides caseolyticum</name>
    <dbReference type="NCBI Taxonomy" id="458233"/>
    <lineage>
        <taxon>Bacteria</taxon>
        <taxon>Bacillati</taxon>
        <taxon>Bacillota</taxon>
        <taxon>Bacilli</taxon>
        <taxon>Bacillales</taxon>
        <taxon>Staphylococcaceae</taxon>
        <taxon>Macrococcoides</taxon>
    </lineage>
</organism>
<protein>
    <recommendedName>
        <fullName evidence="1">Acetate kinase</fullName>
        <ecNumber evidence="1">2.7.2.1</ecNumber>
    </recommendedName>
    <alternativeName>
        <fullName evidence="1">Acetokinase</fullName>
    </alternativeName>
</protein>
<accession>B9E7B7</accession>
<dbReference type="EC" id="2.7.2.1" evidence="1"/>
<dbReference type="EMBL" id="AP009484">
    <property type="protein sequence ID" value="BAH18085.1"/>
    <property type="molecule type" value="Genomic_DNA"/>
</dbReference>
<dbReference type="RefSeq" id="WP_012657283.1">
    <property type="nucleotide sequence ID" value="NC_011999.1"/>
</dbReference>
<dbReference type="SMR" id="B9E7B7"/>
<dbReference type="STRING" id="458233.MCCL_1378"/>
<dbReference type="GeneID" id="61128718"/>
<dbReference type="KEGG" id="mcl:MCCL_1378"/>
<dbReference type="eggNOG" id="COG0282">
    <property type="taxonomic scope" value="Bacteria"/>
</dbReference>
<dbReference type="HOGENOM" id="CLU_020352_0_1_9"/>
<dbReference type="OrthoDB" id="9802453at2"/>
<dbReference type="UniPathway" id="UPA00340">
    <property type="reaction ID" value="UER00458"/>
</dbReference>
<dbReference type="Proteomes" id="UP000001383">
    <property type="component" value="Chromosome"/>
</dbReference>
<dbReference type="GO" id="GO:0005737">
    <property type="term" value="C:cytoplasm"/>
    <property type="evidence" value="ECO:0007669"/>
    <property type="project" value="UniProtKB-SubCell"/>
</dbReference>
<dbReference type="GO" id="GO:0008776">
    <property type="term" value="F:acetate kinase activity"/>
    <property type="evidence" value="ECO:0007669"/>
    <property type="project" value="UniProtKB-UniRule"/>
</dbReference>
<dbReference type="GO" id="GO:0005524">
    <property type="term" value="F:ATP binding"/>
    <property type="evidence" value="ECO:0007669"/>
    <property type="project" value="UniProtKB-KW"/>
</dbReference>
<dbReference type="GO" id="GO:0000287">
    <property type="term" value="F:magnesium ion binding"/>
    <property type="evidence" value="ECO:0007669"/>
    <property type="project" value="UniProtKB-UniRule"/>
</dbReference>
<dbReference type="GO" id="GO:0006083">
    <property type="term" value="P:acetate metabolic process"/>
    <property type="evidence" value="ECO:0007669"/>
    <property type="project" value="TreeGrafter"/>
</dbReference>
<dbReference type="GO" id="GO:0006085">
    <property type="term" value="P:acetyl-CoA biosynthetic process"/>
    <property type="evidence" value="ECO:0007669"/>
    <property type="project" value="UniProtKB-UniRule"/>
</dbReference>
<dbReference type="CDD" id="cd24010">
    <property type="entry name" value="ASKHA_NBD_AcK_PK"/>
    <property type="match status" value="1"/>
</dbReference>
<dbReference type="Gene3D" id="3.30.420.40">
    <property type="match status" value="2"/>
</dbReference>
<dbReference type="HAMAP" id="MF_00020">
    <property type="entry name" value="Acetate_kinase"/>
    <property type="match status" value="1"/>
</dbReference>
<dbReference type="InterPro" id="IPR004372">
    <property type="entry name" value="Ac/propionate_kinase"/>
</dbReference>
<dbReference type="InterPro" id="IPR000890">
    <property type="entry name" value="Aliphatic_acid_kin_short-chain"/>
</dbReference>
<dbReference type="InterPro" id="IPR023865">
    <property type="entry name" value="Aliphatic_acid_kinase_CS"/>
</dbReference>
<dbReference type="InterPro" id="IPR043129">
    <property type="entry name" value="ATPase_NBD"/>
</dbReference>
<dbReference type="NCBIfam" id="TIGR00016">
    <property type="entry name" value="ackA"/>
    <property type="match status" value="1"/>
</dbReference>
<dbReference type="PANTHER" id="PTHR21060">
    <property type="entry name" value="ACETATE KINASE"/>
    <property type="match status" value="1"/>
</dbReference>
<dbReference type="PANTHER" id="PTHR21060:SF15">
    <property type="entry name" value="ACETATE KINASE-RELATED"/>
    <property type="match status" value="1"/>
</dbReference>
<dbReference type="Pfam" id="PF00871">
    <property type="entry name" value="Acetate_kinase"/>
    <property type="match status" value="1"/>
</dbReference>
<dbReference type="PIRSF" id="PIRSF000722">
    <property type="entry name" value="Acetate_prop_kin"/>
    <property type="match status" value="1"/>
</dbReference>
<dbReference type="PRINTS" id="PR00471">
    <property type="entry name" value="ACETATEKNASE"/>
</dbReference>
<dbReference type="SUPFAM" id="SSF53067">
    <property type="entry name" value="Actin-like ATPase domain"/>
    <property type="match status" value="2"/>
</dbReference>
<dbReference type="PROSITE" id="PS01075">
    <property type="entry name" value="ACETATE_KINASE_1"/>
    <property type="match status" value="1"/>
</dbReference>
<dbReference type="PROSITE" id="PS01076">
    <property type="entry name" value="ACETATE_KINASE_2"/>
    <property type="match status" value="1"/>
</dbReference>
<name>ACKA_MACCJ</name>
<keyword id="KW-0067">ATP-binding</keyword>
<keyword id="KW-0963">Cytoplasm</keyword>
<keyword id="KW-0418">Kinase</keyword>
<keyword id="KW-0460">Magnesium</keyword>
<keyword id="KW-0479">Metal-binding</keyword>
<keyword id="KW-0547">Nucleotide-binding</keyword>
<keyword id="KW-1185">Reference proteome</keyword>
<keyword id="KW-0808">Transferase</keyword>
<reference key="1">
    <citation type="journal article" date="2009" name="J. Bacteriol.">
        <title>Complete genome sequence of Macrococcus caseolyticus strain JCSCS5402, reflecting the ancestral genome of the human-pathogenic staphylococci.</title>
        <authorList>
            <person name="Baba T."/>
            <person name="Kuwahara-Arai K."/>
            <person name="Uchiyama I."/>
            <person name="Takeuchi F."/>
            <person name="Ito T."/>
            <person name="Hiramatsu K."/>
        </authorList>
    </citation>
    <scope>NUCLEOTIDE SEQUENCE [LARGE SCALE GENOMIC DNA]</scope>
    <source>
        <strain>JCSC5402</strain>
    </source>
</reference>
<feature type="chain" id="PRO_1000116804" description="Acetate kinase">
    <location>
        <begin position="1"/>
        <end position="398"/>
    </location>
</feature>
<feature type="active site" description="Proton donor/acceptor" evidence="1">
    <location>
        <position position="146"/>
    </location>
</feature>
<feature type="binding site" evidence="1">
    <location>
        <position position="8"/>
    </location>
    <ligand>
        <name>Mg(2+)</name>
        <dbReference type="ChEBI" id="CHEBI:18420"/>
    </ligand>
</feature>
<feature type="binding site" evidence="1">
    <location>
        <position position="15"/>
    </location>
    <ligand>
        <name>ATP</name>
        <dbReference type="ChEBI" id="CHEBI:30616"/>
    </ligand>
</feature>
<feature type="binding site" evidence="1">
    <location>
        <position position="89"/>
    </location>
    <ligand>
        <name>substrate</name>
    </ligand>
</feature>
<feature type="binding site" evidence="1">
    <location>
        <begin position="206"/>
        <end position="210"/>
    </location>
    <ligand>
        <name>ATP</name>
        <dbReference type="ChEBI" id="CHEBI:30616"/>
    </ligand>
</feature>
<feature type="binding site" evidence="1">
    <location>
        <begin position="281"/>
        <end position="283"/>
    </location>
    <ligand>
        <name>ATP</name>
        <dbReference type="ChEBI" id="CHEBI:30616"/>
    </ligand>
</feature>
<feature type="binding site" evidence="1">
    <location>
        <begin position="329"/>
        <end position="333"/>
    </location>
    <ligand>
        <name>ATP</name>
        <dbReference type="ChEBI" id="CHEBI:30616"/>
    </ligand>
</feature>
<feature type="binding site" evidence="1">
    <location>
        <position position="383"/>
    </location>
    <ligand>
        <name>Mg(2+)</name>
        <dbReference type="ChEBI" id="CHEBI:18420"/>
    </ligand>
</feature>
<feature type="site" description="Transition state stabilizer" evidence="1">
    <location>
        <position position="178"/>
    </location>
</feature>
<feature type="site" description="Transition state stabilizer" evidence="1">
    <location>
        <position position="239"/>
    </location>
</feature>
<comment type="function">
    <text evidence="1">Catalyzes the formation of acetyl phosphate from acetate and ATP. Can also catalyze the reverse reaction.</text>
</comment>
<comment type="catalytic activity">
    <reaction evidence="1">
        <text>acetate + ATP = acetyl phosphate + ADP</text>
        <dbReference type="Rhea" id="RHEA:11352"/>
        <dbReference type="ChEBI" id="CHEBI:22191"/>
        <dbReference type="ChEBI" id="CHEBI:30089"/>
        <dbReference type="ChEBI" id="CHEBI:30616"/>
        <dbReference type="ChEBI" id="CHEBI:456216"/>
        <dbReference type="EC" id="2.7.2.1"/>
    </reaction>
</comment>
<comment type="cofactor">
    <cofactor evidence="1">
        <name>Mg(2+)</name>
        <dbReference type="ChEBI" id="CHEBI:18420"/>
    </cofactor>
    <cofactor evidence="1">
        <name>Mn(2+)</name>
        <dbReference type="ChEBI" id="CHEBI:29035"/>
    </cofactor>
    <text evidence="1">Mg(2+). Can also accept Mn(2+).</text>
</comment>
<comment type="pathway">
    <text evidence="1">Metabolic intermediate biosynthesis; acetyl-CoA biosynthesis; acetyl-CoA from acetate: step 1/2.</text>
</comment>
<comment type="subunit">
    <text evidence="1">Homodimer.</text>
</comment>
<comment type="subcellular location">
    <subcellularLocation>
        <location evidence="1">Cytoplasm</location>
    </subcellularLocation>
</comment>
<comment type="similarity">
    <text evidence="1">Belongs to the acetokinase family.</text>
</comment>
<proteinExistence type="inferred from homology"/>
<gene>
    <name evidence="1" type="primary">ackA</name>
    <name type="ordered locus">MCCL_1378</name>
</gene>
<sequence length="398" mass="43889">MKKIMAINAGSSSLKFQLFEMPEEKVLTKGLVERIGLPNSIFTISVNGEKITQTLDIKNHEQAVDMMLDEMKKHGIIQDINDLDGTGHRVVQGGDIFETSALVTDEVEKQIEELCELAPLHNPANLMGIRAFRKMLPNIPHVAIFDTSFHTTMPEEAFLYSLPYKYYQDYGIRKYGAHGTSHKFVAERAAELLDRPIEQLRIITCHIGNGASIAAVEGGKSVDTSMGFTPLAGVTMGTRSGNLDPAIIPFLMEKTGKTAQEVINVLNKESGLLGISGISSDLRDIEQKAEEGDERAILALDVFASRIHKYIGSYATRMKGLDAIVFTAGVGENSDIVRARVLEGLEFMGVYWDPKLNAGLRGKEAFINYPHSPVKVMVIPTDEEVMIARDTMTFGNLK</sequence>
<evidence type="ECO:0000255" key="1">
    <source>
        <dbReference type="HAMAP-Rule" id="MF_00020"/>
    </source>
</evidence>